<reference key="1">
    <citation type="journal article" date="2008" name="Environ. Microbiol.">
        <title>The genome of Erwinia tasmaniensis strain Et1/99, a non-pathogenic bacterium in the genus Erwinia.</title>
        <authorList>
            <person name="Kube M."/>
            <person name="Migdoll A.M."/>
            <person name="Mueller I."/>
            <person name="Kuhl H."/>
            <person name="Beck A."/>
            <person name="Reinhardt R."/>
            <person name="Geider K."/>
        </authorList>
    </citation>
    <scope>NUCLEOTIDE SEQUENCE [LARGE SCALE GENOMIC DNA]</scope>
    <source>
        <strain>DSM 17950 / CFBP 7177 / CIP 109463 / NCPPB 4357 / Et1/99</strain>
    </source>
</reference>
<feature type="chain" id="PRO_1000115863" description="Enolase">
    <location>
        <begin position="1"/>
        <end position="431"/>
    </location>
</feature>
<feature type="active site" description="Proton donor" evidence="1">
    <location>
        <position position="209"/>
    </location>
</feature>
<feature type="active site" description="Proton acceptor" evidence="1">
    <location>
        <position position="342"/>
    </location>
</feature>
<feature type="binding site" evidence="1">
    <location>
        <position position="167"/>
    </location>
    <ligand>
        <name>(2R)-2-phosphoglycerate</name>
        <dbReference type="ChEBI" id="CHEBI:58289"/>
    </ligand>
</feature>
<feature type="binding site" evidence="1">
    <location>
        <position position="246"/>
    </location>
    <ligand>
        <name>Mg(2+)</name>
        <dbReference type="ChEBI" id="CHEBI:18420"/>
    </ligand>
</feature>
<feature type="binding site" evidence="1">
    <location>
        <position position="290"/>
    </location>
    <ligand>
        <name>Mg(2+)</name>
        <dbReference type="ChEBI" id="CHEBI:18420"/>
    </ligand>
</feature>
<feature type="binding site" evidence="1">
    <location>
        <position position="317"/>
    </location>
    <ligand>
        <name>Mg(2+)</name>
        <dbReference type="ChEBI" id="CHEBI:18420"/>
    </ligand>
</feature>
<feature type="binding site" evidence="1">
    <location>
        <position position="342"/>
    </location>
    <ligand>
        <name>(2R)-2-phosphoglycerate</name>
        <dbReference type="ChEBI" id="CHEBI:58289"/>
    </ligand>
</feature>
<feature type="binding site" evidence="1">
    <location>
        <position position="371"/>
    </location>
    <ligand>
        <name>(2R)-2-phosphoglycerate</name>
        <dbReference type="ChEBI" id="CHEBI:58289"/>
    </ligand>
</feature>
<feature type="binding site" evidence="1">
    <location>
        <position position="372"/>
    </location>
    <ligand>
        <name>(2R)-2-phosphoglycerate</name>
        <dbReference type="ChEBI" id="CHEBI:58289"/>
    </ligand>
</feature>
<feature type="binding site" evidence="1">
    <location>
        <position position="393"/>
    </location>
    <ligand>
        <name>(2R)-2-phosphoglycerate</name>
        <dbReference type="ChEBI" id="CHEBI:58289"/>
    </ligand>
</feature>
<proteinExistence type="inferred from homology"/>
<organism>
    <name type="scientific">Erwinia tasmaniensis (strain DSM 17950 / CFBP 7177 / CIP 109463 / NCPPB 4357 / Et1/99)</name>
    <dbReference type="NCBI Taxonomy" id="465817"/>
    <lineage>
        <taxon>Bacteria</taxon>
        <taxon>Pseudomonadati</taxon>
        <taxon>Pseudomonadota</taxon>
        <taxon>Gammaproteobacteria</taxon>
        <taxon>Enterobacterales</taxon>
        <taxon>Erwiniaceae</taxon>
        <taxon>Erwinia</taxon>
    </lineage>
</organism>
<accession>B2VFY8</accession>
<gene>
    <name evidence="1" type="primary">eno</name>
    <name type="ordered locus">ETA_27200</name>
</gene>
<protein>
    <recommendedName>
        <fullName evidence="1">Enolase</fullName>
        <ecNumber evidence="1">4.2.1.11</ecNumber>
    </recommendedName>
    <alternativeName>
        <fullName evidence="1">2-phospho-D-glycerate hydro-lyase</fullName>
    </alternativeName>
    <alternativeName>
        <fullName evidence="1">2-phosphoglycerate dehydratase</fullName>
    </alternativeName>
</protein>
<keyword id="KW-0963">Cytoplasm</keyword>
<keyword id="KW-0324">Glycolysis</keyword>
<keyword id="KW-0456">Lyase</keyword>
<keyword id="KW-0460">Magnesium</keyword>
<keyword id="KW-0479">Metal-binding</keyword>
<keyword id="KW-1185">Reference proteome</keyword>
<keyword id="KW-0964">Secreted</keyword>
<name>ENO_ERWT9</name>
<sequence length="431" mass="45385">MSKIVKVIGREIIDSRGNPTVEAEVHLEGGFVGLAAAPSGASTGSREALELRDGDKSRFLGKGVTKAVGAVNGPIAEAVTGKDAKDQANIDKIMIDLDGTENKSKFGANAILAVSLAAAKAAAAAKGMPLYEHIAELNGTPGKFSMPLPMMNIINGGEHADNNVDIQEFMIQPVGAKTLKEAVRIGSEVFHNLAKVLKSKGMSTAVGDEGGYAPNLGSNAEALAVIAEAVKAAGYELGKDITLAMDCAASEFYKDGKYVLAGEGNKAFTSEEFTHFLEDLTKQYPIVSIEDGLDESDWDGFAYQTKVLGDKIQLVGDDLFVTNTKILKEGIDKGIANSILIKFNQIGSLTETLAAIKMAKDAGYTAVISHRSGETEDATIADLAVGTAAGQIKTGSMSRSDRVAKYNQLIRIEEALGNRAPFNGLKEVKGQ</sequence>
<comment type="function">
    <text evidence="1">Catalyzes the reversible conversion of 2-phosphoglycerate (2-PG) into phosphoenolpyruvate (PEP). It is essential for the degradation of carbohydrates via glycolysis.</text>
</comment>
<comment type="catalytic activity">
    <reaction evidence="1">
        <text>(2R)-2-phosphoglycerate = phosphoenolpyruvate + H2O</text>
        <dbReference type="Rhea" id="RHEA:10164"/>
        <dbReference type="ChEBI" id="CHEBI:15377"/>
        <dbReference type="ChEBI" id="CHEBI:58289"/>
        <dbReference type="ChEBI" id="CHEBI:58702"/>
        <dbReference type="EC" id="4.2.1.11"/>
    </reaction>
</comment>
<comment type="cofactor">
    <cofactor evidence="1">
        <name>Mg(2+)</name>
        <dbReference type="ChEBI" id="CHEBI:18420"/>
    </cofactor>
    <text evidence="1">Binds a second Mg(2+) ion via substrate during catalysis.</text>
</comment>
<comment type="pathway">
    <text evidence="1">Carbohydrate degradation; glycolysis; pyruvate from D-glyceraldehyde 3-phosphate: step 4/5.</text>
</comment>
<comment type="subunit">
    <text evidence="1">Component of the RNA degradosome, a multiprotein complex involved in RNA processing and mRNA degradation.</text>
</comment>
<comment type="subcellular location">
    <subcellularLocation>
        <location evidence="1">Cytoplasm</location>
    </subcellularLocation>
    <subcellularLocation>
        <location evidence="1">Secreted</location>
    </subcellularLocation>
    <subcellularLocation>
        <location evidence="1">Cell surface</location>
    </subcellularLocation>
    <text evidence="1">Fractions of enolase are present in both the cytoplasm and on the cell surface.</text>
</comment>
<comment type="similarity">
    <text evidence="1">Belongs to the enolase family.</text>
</comment>
<evidence type="ECO:0000255" key="1">
    <source>
        <dbReference type="HAMAP-Rule" id="MF_00318"/>
    </source>
</evidence>
<dbReference type="EC" id="4.2.1.11" evidence="1"/>
<dbReference type="EMBL" id="CU468135">
    <property type="protein sequence ID" value="CAO97766.1"/>
    <property type="molecule type" value="Genomic_DNA"/>
</dbReference>
<dbReference type="RefSeq" id="WP_012442423.1">
    <property type="nucleotide sequence ID" value="NC_010694.1"/>
</dbReference>
<dbReference type="SMR" id="B2VFY8"/>
<dbReference type="STRING" id="465817.ETA_27200"/>
<dbReference type="KEGG" id="eta:ETA_27200"/>
<dbReference type="eggNOG" id="COG0148">
    <property type="taxonomic scope" value="Bacteria"/>
</dbReference>
<dbReference type="HOGENOM" id="CLU_031223_2_1_6"/>
<dbReference type="OrthoDB" id="9804716at2"/>
<dbReference type="UniPathway" id="UPA00109">
    <property type="reaction ID" value="UER00187"/>
</dbReference>
<dbReference type="Proteomes" id="UP000001726">
    <property type="component" value="Chromosome"/>
</dbReference>
<dbReference type="GO" id="GO:0009986">
    <property type="term" value="C:cell surface"/>
    <property type="evidence" value="ECO:0007669"/>
    <property type="project" value="UniProtKB-SubCell"/>
</dbReference>
<dbReference type="GO" id="GO:0005576">
    <property type="term" value="C:extracellular region"/>
    <property type="evidence" value="ECO:0007669"/>
    <property type="project" value="UniProtKB-SubCell"/>
</dbReference>
<dbReference type="GO" id="GO:0000015">
    <property type="term" value="C:phosphopyruvate hydratase complex"/>
    <property type="evidence" value="ECO:0007669"/>
    <property type="project" value="InterPro"/>
</dbReference>
<dbReference type="GO" id="GO:0000287">
    <property type="term" value="F:magnesium ion binding"/>
    <property type="evidence" value="ECO:0007669"/>
    <property type="project" value="UniProtKB-UniRule"/>
</dbReference>
<dbReference type="GO" id="GO:0004634">
    <property type="term" value="F:phosphopyruvate hydratase activity"/>
    <property type="evidence" value="ECO:0007669"/>
    <property type="project" value="UniProtKB-UniRule"/>
</dbReference>
<dbReference type="GO" id="GO:0006096">
    <property type="term" value="P:glycolytic process"/>
    <property type="evidence" value="ECO:0007669"/>
    <property type="project" value="UniProtKB-UniRule"/>
</dbReference>
<dbReference type="CDD" id="cd03313">
    <property type="entry name" value="enolase"/>
    <property type="match status" value="1"/>
</dbReference>
<dbReference type="FunFam" id="3.20.20.120:FF:000001">
    <property type="entry name" value="Enolase"/>
    <property type="match status" value="1"/>
</dbReference>
<dbReference type="FunFam" id="3.30.390.10:FF:000001">
    <property type="entry name" value="Enolase"/>
    <property type="match status" value="1"/>
</dbReference>
<dbReference type="Gene3D" id="3.20.20.120">
    <property type="entry name" value="Enolase-like C-terminal domain"/>
    <property type="match status" value="1"/>
</dbReference>
<dbReference type="Gene3D" id="3.30.390.10">
    <property type="entry name" value="Enolase-like, N-terminal domain"/>
    <property type="match status" value="1"/>
</dbReference>
<dbReference type="HAMAP" id="MF_00318">
    <property type="entry name" value="Enolase"/>
    <property type="match status" value="1"/>
</dbReference>
<dbReference type="InterPro" id="IPR000941">
    <property type="entry name" value="Enolase"/>
</dbReference>
<dbReference type="InterPro" id="IPR036849">
    <property type="entry name" value="Enolase-like_C_sf"/>
</dbReference>
<dbReference type="InterPro" id="IPR029017">
    <property type="entry name" value="Enolase-like_N"/>
</dbReference>
<dbReference type="InterPro" id="IPR020810">
    <property type="entry name" value="Enolase_C"/>
</dbReference>
<dbReference type="InterPro" id="IPR020809">
    <property type="entry name" value="Enolase_CS"/>
</dbReference>
<dbReference type="InterPro" id="IPR020811">
    <property type="entry name" value="Enolase_N"/>
</dbReference>
<dbReference type="NCBIfam" id="TIGR01060">
    <property type="entry name" value="eno"/>
    <property type="match status" value="1"/>
</dbReference>
<dbReference type="PANTHER" id="PTHR11902">
    <property type="entry name" value="ENOLASE"/>
    <property type="match status" value="1"/>
</dbReference>
<dbReference type="PANTHER" id="PTHR11902:SF1">
    <property type="entry name" value="ENOLASE"/>
    <property type="match status" value="1"/>
</dbReference>
<dbReference type="Pfam" id="PF00113">
    <property type="entry name" value="Enolase_C"/>
    <property type="match status" value="1"/>
</dbReference>
<dbReference type="Pfam" id="PF03952">
    <property type="entry name" value="Enolase_N"/>
    <property type="match status" value="1"/>
</dbReference>
<dbReference type="PIRSF" id="PIRSF001400">
    <property type="entry name" value="Enolase"/>
    <property type="match status" value="1"/>
</dbReference>
<dbReference type="PRINTS" id="PR00148">
    <property type="entry name" value="ENOLASE"/>
</dbReference>
<dbReference type="SFLD" id="SFLDS00001">
    <property type="entry name" value="Enolase"/>
    <property type="match status" value="1"/>
</dbReference>
<dbReference type="SFLD" id="SFLDF00002">
    <property type="entry name" value="enolase"/>
    <property type="match status" value="1"/>
</dbReference>
<dbReference type="SMART" id="SM01192">
    <property type="entry name" value="Enolase_C"/>
    <property type="match status" value="1"/>
</dbReference>
<dbReference type="SMART" id="SM01193">
    <property type="entry name" value="Enolase_N"/>
    <property type="match status" value="1"/>
</dbReference>
<dbReference type="SUPFAM" id="SSF51604">
    <property type="entry name" value="Enolase C-terminal domain-like"/>
    <property type="match status" value="1"/>
</dbReference>
<dbReference type="SUPFAM" id="SSF54826">
    <property type="entry name" value="Enolase N-terminal domain-like"/>
    <property type="match status" value="1"/>
</dbReference>
<dbReference type="PROSITE" id="PS00164">
    <property type="entry name" value="ENOLASE"/>
    <property type="match status" value="1"/>
</dbReference>